<dbReference type="EC" id="6.3.4.4" evidence="1"/>
<dbReference type="EMBL" id="AP009247">
    <property type="protein sequence ID" value="BAF61606.1"/>
    <property type="molecule type" value="Genomic_DNA"/>
</dbReference>
<dbReference type="RefSeq" id="WP_011929876.1">
    <property type="nucleotide sequence ID" value="NC_009465.1"/>
</dbReference>
<dbReference type="SMR" id="A5CWQ5"/>
<dbReference type="STRING" id="412965.COSY_0487"/>
<dbReference type="KEGG" id="vok:COSY_0487"/>
<dbReference type="eggNOG" id="COG0104">
    <property type="taxonomic scope" value="Bacteria"/>
</dbReference>
<dbReference type="HOGENOM" id="CLU_029848_0_0_6"/>
<dbReference type="OrthoDB" id="9807553at2"/>
<dbReference type="UniPathway" id="UPA00075">
    <property type="reaction ID" value="UER00335"/>
</dbReference>
<dbReference type="Proteomes" id="UP000000247">
    <property type="component" value="Chromosome"/>
</dbReference>
<dbReference type="GO" id="GO:0005737">
    <property type="term" value="C:cytoplasm"/>
    <property type="evidence" value="ECO:0007669"/>
    <property type="project" value="UniProtKB-SubCell"/>
</dbReference>
<dbReference type="GO" id="GO:0004019">
    <property type="term" value="F:adenylosuccinate synthase activity"/>
    <property type="evidence" value="ECO:0007669"/>
    <property type="project" value="UniProtKB-UniRule"/>
</dbReference>
<dbReference type="GO" id="GO:0005525">
    <property type="term" value="F:GTP binding"/>
    <property type="evidence" value="ECO:0007669"/>
    <property type="project" value="UniProtKB-UniRule"/>
</dbReference>
<dbReference type="GO" id="GO:0000287">
    <property type="term" value="F:magnesium ion binding"/>
    <property type="evidence" value="ECO:0007669"/>
    <property type="project" value="UniProtKB-UniRule"/>
</dbReference>
<dbReference type="GO" id="GO:0044208">
    <property type="term" value="P:'de novo' AMP biosynthetic process"/>
    <property type="evidence" value="ECO:0007669"/>
    <property type="project" value="UniProtKB-UniRule"/>
</dbReference>
<dbReference type="GO" id="GO:0046040">
    <property type="term" value="P:IMP metabolic process"/>
    <property type="evidence" value="ECO:0007669"/>
    <property type="project" value="TreeGrafter"/>
</dbReference>
<dbReference type="CDD" id="cd03108">
    <property type="entry name" value="AdSS"/>
    <property type="match status" value="1"/>
</dbReference>
<dbReference type="FunFam" id="1.10.300.10:FF:000001">
    <property type="entry name" value="Adenylosuccinate synthetase"/>
    <property type="match status" value="1"/>
</dbReference>
<dbReference type="FunFam" id="3.90.170.10:FF:000001">
    <property type="entry name" value="Adenylosuccinate synthetase"/>
    <property type="match status" value="1"/>
</dbReference>
<dbReference type="Gene3D" id="3.40.440.10">
    <property type="entry name" value="Adenylosuccinate Synthetase, subunit A, domain 1"/>
    <property type="match status" value="1"/>
</dbReference>
<dbReference type="Gene3D" id="1.10.300.10">
    <property type="entry name" value="Adenylosuccinate Synthetase, subunit A, domain 2"/>
    <property type="match status" value="1"/>
</dbReference>
<dbReference type="Gene3D" id="3.90.170.10">
    <property type="entry name" value="Adenylosuccinate Synthetase, subunit A, domain 3"/>
    <property type="match status" value="1"/>
</dbReference>
<dbReference type="HAMAP" id="MF_00011">
    <property type="entry name" value="Adenylosucc_synth"/>
    <property type="match status" value="1"/>
</dbReference>
<dbReference type="InterPro" id="IPR018220">
    <property type="entry name" value="Adenylosuccin_syn_GTP-bd"/>
</dbReference>
<dbReference type="InterPro" id="IPR033128">
    <property type="entry name" value="Adenylosuccin_syn_Lys_AS"/>
</dbReference>
<dbReference type="InterPro" id="IPR042109">
    <property type="entry name" value="Adenylosuccinate_synth_dom1"/>
</dbReference>
<dbReference type="InterPro" id="IPR042110">
    <property type="entry name" value="Adenylosuccinate_synth_dom2"/>
</dbReference>
<dbReference type="InterPro" id="IPR042111">
    <property type="entry name" value="Adenylosuccinate_synth_dom3"/>
</dbReference>
<dbReference type="InterPro" id="IPR001114">
    <property type="entry name" value="Adenylosuccinate_synthetase"/>
</dbReference>
<dbReference type="InterPro" id="IPR027417">
    <property type="entry name" value="P-loop_NTPase"/>
</dbReference>
<dbReference type="NCBIfam" id="NF002223">
    <property type="entry name" value="PRK01117.1"/>
    <property type="match status" value="1"/>
</dbReference>
<dbReference type="NCBIfam" id="TIGR00184">
    <property type="entry name" value="purA"/>
    <property type="match status" value="1"/>
</dbReference>
<dbReference type="PANTHER" id="PTHR11846">
    <property type="entry name" value="ADENYLOSUCCINATE SYNTHETASE"/>
    <property type="match status" value="1"/>
</dbReference>
<dbReference type="PANTHER" id="PTHR11846:SF0">
    <property type="entry name" value="ADENYLOSUCCINATE SYNTHETASE"/>
    <property type="match status" value="1"/>
</dbReference>
<dbReference type="Pfam" id="PF00709">
    <property type="entry name" value="Adenylsucc_synt"/>
    <property type="match status" value="1"/>
</dbReference>
<dbReference type="SMART" id="SM00788">
    <property type="entry name" value="Adenylsucc_synt"/>
    <property type="match status" value="1"/>
</dbReference>
<dbReference type="SUPFAM" id="SSF52540">
    <property type="entry name" value="P-loop containing nucleoside triphosphate hydrolases"/>
    <property type="match status" value="1"/>
</dbReference>
<dbReference type="PROSITE" id="PS01266">
    <property type="entry name" value="ADENYLOSUCCIN_SYN_1"/>
    <property type="match status" value="1"/>
</dbReference>
<dbReference type="PROSITE" id="PS00513">
    <property type="entry name" value="ADENYLOSUCCIN_SYN_2"/>
    <property type="match status" value="1"/>
</dbReference>
<gene>
    <name evidence="1" type="primary">purA</name>
    <name type="ordered locus">COSY_0487</name>
</gene>
<comment type="function">
    <text evidence="1">Plays an important role in the de novo pathway of purine nucleotide biosynthesis. Catalyzes the first committed step in the biosynthesis of AMP from IMP.</text>
</comment>
<comment type="catalytic activity">
    <reaction evidence="1">
        <text>IMP + L-aspartate + GTP = N(6)-(1,2-dicarboxyethyl)-AMP + GDP + phosphate + 2 H(+)</text>
        <dbReference type="Rhea" id="RHEA:15753"/>
        <dbReference type="ChEBI" id="CHEBI:15378"/>
        <dbReference type="ChEBI" id="CHEBI:29991"/>
        <dbReference type="ChEBI" id="CHEBI:37565"/>
        <dbReference type="ChEBI" id="CHEBI:43474"/>
        <dbReference type="ChEBI" id="CHEBI:57567"/>
        <dbReference type="ChEBI" id="CHEBI:58053"/>
        <dbReference type="ChEBI" id="CHEBI:58189"/>
        <dbReference type="EC" id="6.3.4.4"/>
    </reaction>
</comment>
<comment type="cofactor">
    <cofactor evidence="1">
        <name>Mg(2+)</name>
        <dbReference type="ChEBI" id="CHEBI:18420"/>
    </cofactor>
    <text evidence="1">Binds 1 Mg(2+) ion per subunit.</text>
</comment>
<comment type="pathway">
    <text evidence="1">Purine metabolism; AMP biosynthesis via de novo pathway; AMP from IMP: step 1/2.</text>
</comment>
<comment type="subunit">
    <text evidence="1">Homodimer.</text>
</comment>
<comment type="subcellular location">
    <subcellularLocation>
        <location evidence="1">Cytoplasm</location>
    </subcellularLocation>
</comment>
<comment type="similarity">
    <text evidence="1">Belongs to the adenylosuccinate synthetase family.</text>
</comment>
<feature type="chain" id="PRO_1000000944" description="Adenylosuccinate synthetase">
    <location>
        <begin position="1"/>
        <end position="438"/>
    </location>
</feature>
<feature type="active site" description="Proton acceptor" evidence="1">
    <location>
        <position position="14"/>
    </location>
</feature>
<feature type="active site" description="Proton donor" evidence="1">
    <location>
        <position position="42"/>
    </location>
</feature>
<feature type="binding site" evidence="1">
    <location>
        <begin position="13"/>
        <end position="19"/>
    </location>
    <ligand>
        <name>GTP</name>
        <dbReference type="ChEBI" id="CHEBI:37565"/>
    </ligand>
</feature>
<feature type="binding site" description="in other chain" evidence="1">
    <location>
        <begin position="14"/>
        <end position="17"/>
    </location>
    <ligand>
        <name>IMP</name>
        <dbReference type="ChEBI" id="CHEBI:58053"/>
        <note>ligand shared between dimeric partners</note>
    </ligand>
</feature>
<feature type="binding site" evidence="1">
    <location>
        <position position="14"/>
    </location>
    <ligand>
        <name>Mg(2+)</name>
        <dbReference type="ChEBI" id="CHEBI:18420"/>
    </ligand>
</feature>
<feature type="binding site" description="in other chain" evidence="1">
    <location>
        <begin position="39"/>
        <end position="42"/>
    </location>
    <ligand>
        <name>IMP</name>
        <dbReference type="ChEBI" id="CHEBI:58053"/>
        <note>ligand shared between dimeric partners</note>
    </ligand>
</feature>
<feature type="binding site" evidence="1">
    <location>
        <begin position="41"/>
        <end position="43"/>
    </location>
    <ligand>
        <name>GTP</name>
        <dbReference type="ChEBI" id="CHEBI:37565"/>
    </ligand>
</feature>
<feature type="binding site" evidence="1">
    <location>
        <position position="41"/>
    </location>
    <ligand>
        <name>Mg(2+)</name>
        <dbReference type="ChEBI" id="CHEBI:18420"/>
    </ligand>
</feature>
<feature type="binding site" description="in other chain" evidence="1">
    <location>
        <position position="130"/>
    </location>
    <ligand>
        <name>IMP</name>
        <dbReference type="ChEBI" id="CHEBI:58053"/>
        <note>ligand shared between dimeric partners</note>
    </ligand>
</feature>
<feature type="binding site" evidence="1">
    <location>
        <position position="144"/>
    </location>
    <ligand>
        <name>IMP</name>
        <dbReference type="ChEBI" id="CHEBI:58053"/>
        <note>ligand shared between dimeric partners</note>
    </ligand>
</feature>
<feature type="binding site" description="in other chain" evidence="1">
    <location>
        <position position="225"/>
    </location>
    <ligand>
        <name>IMP</name>
        <dbReference type="ChEBI" id="CHEBI:58053"/>
        <note>ligand shared between dimeric partners</note>
    </ligand>
</feature>
<feature type="binding site" description="in other chain" evidence="1">
    <location>
        <position position="240"/>
    </location>
    <ligand>
        <name>IMP</name>
        <dbReference type="ChEBI" id="CHEBI:58053"/>
        <note>ligand shared between dimeric partners</note>
    </ligand>
</feature>
<feature type="binding site" evidence="1">
    <location>
        <begin position="308"/>
        <end position="314"/>
    </location>
    <ligand>
        <name>substrate</name>
    </ligand>
</feature>
<feature type="binding site" description="in other chain" evidence="1">
    <location>
        <position position="312"/>
    </location>
    <ligand>
        <name>IMP</name>
        <dbReference type="ChEBI" id="CHEBI:58053"/>
        <note>ligand shared between dimeric partners</note>
    </ligand>
</feature>
<feature type="binding site" evidence="1">
    <location>
        <position position="314"/>
    </location>
    <ligand>
        <name>GTP</name>
        <dbReference type="ChEBI" id="CHEBI:37565"/>
    </ligand>
</feature>
<feature type="binding site" evidence="1">
    <location>
        <begin position="340"/>
        <end position="342"/>
    </location>
    <ligand>
        <name>GTP</name>
        <dbReference type="ChEBI" id="CHEBI:37565"/>
    </ligand>
</feature>
<feature type="binding site" evidence="1">
    <location>
        <begin position="422"/>
        <end position="424"/>
    </location>
    <ligand>
        <name>GTP</name>
        <dbReference type="ChEBI" id="CHEBI:37565"/>
    </ligand>
</feature>
<accession>A5CWQ5</accession>
<organism>
    <name type="scientific">Vesicomyosocius okutanii subsp. Calyptogena okutanii (strain HA)</name>
    <dbReference type="NCBI Taxonomy" id="412965"/>
    <lineage>
        <taxon>Bacteria</taxon>
        <taxon>Pseudomonadati</taxon>
        <taxon>Pseudomonadota</taxon>
        <taxon>Gammaproteobacteria</taxon>
        <taxon>Candidatus Pseudothioglobaceae</taxon>
        <taxon>Candidatus Vesicomyosocius</taxon>
    </lineage>
</organism>
<proteinExistence type="inferred from homology"/>
<sequence>MSKNVVIIGTQWGDEGKGKIVDLISDRAVSVVRFQGGHNAGHTLVIDQQTTVLHLIPSGILHDHVECLIAHGVVLSMSALLKEIAELEGANINVTERLKISPGCPLIFPYHIALDNAREAKCGKTAIGTTGNGIGPTYEDKVARRGLRAGDLLNPILFASKLKEVVEYHNFLLTNYYGTAPVDYQVILYEALSQAKKIKHMIIDVTEKIHQHIANDENILFEGAQGTLLDIDQGTYPFVTSSNTTSGGAVTGSGVGVTDINYVLGIVKAYTTRVGSGPFPTELIYNVSTNKGDAIGKVLGTVGHEFGATTGRQRRCGWLDMVTLKRSFNLNAVTGICLTKLDVLDSLISVKICVAYKLNGKEVTIPPYDAKGYTDAKPVYIEMPGWKTSTIGTNSFDSLPIEAQNYIHKIEQLANLPVDILSTGPDRTQTLILKHPFE</sequence>
<name>PURA_VESOH</name>
<keyword id="KW-0963">Cytoplasm</keyword>
<keyword id="KW-0342">GTP-binding</keyword>
<keyword id="KW-0436">Ligase</keyword>
<keyword id="KW-0460">Magnesium</keyword>
<keyword id="KW-0479">Metal-binding</keyword>
<keyword id="KW-0547">Nucleotide-binding</keyword>
<keyword id="KW-0658">Purine biosynthesis</keyword>
<keyword id="KW-1185">Reference proteome</keyword>
<protein>
    <recommendedName>
        <fullName evidence="1">Adenylosuccinate synthetase</fullName>
        <shortName evidence="1">AMPSase</shortName>
        <shortName evidence="1">AdSS</shortName>
        <ecNumber evidence="1">6.3.4.4</ecNumber>
    </recommendedName>
    <alternativeName>
        <fullName evidence="1">IMP--aspartate ligase</fullName>
    </alternativeName>
</protein>
<reference key="1">
    <citation type="journal article" date="2007" name="Curr. Biol.">
        <title>Reduced genome of the thioautotrophic intracellular symbiont in a deep-sea clam, Calyptogena okutanii.</title>
        <authorList>
            <person name="Kuwahara H."/>
            <person name="Yoshida T."/>
            <person name="Takaki Y."/>
            <person name="Shimamura S."/>
            <person name="Nishi S."/>
            <person name="Harada M."/>
            <person name="Matsuyama K."/>
            <person name="Takishita K."/>
            <person name="Kawato M."/>
            <person name="Uematsu K."/>
            <person name="Fujiwara Y."/>
            <person name="Sato T."/>
            <person name="Kato C."/>
            <person name="Kitagawa M."/>
            <person name="Kato I."/>
            <person name="Maruyama T."/>
        </authorList>
    </citation>
    <scope>NUCLEOTIDE SEQUENCE [LARGE SCALE GENOMIC DNA]</scope>
    <source>
        <strain>HA</strain>
    </source>
</reference>
<evidence type="ECO:0000255" key="1">
    <source>
        <dbReference type="HAMAP-Rule" id="MF_00011"/>
    </source>
</evidence>